<evidence type="ECO:0000250" key="1"/>
<evidence type="ECO:0000255" key="2"/>
<evidence type="ECO:0000256" key="3">
    <source>
        <dbReference type="SAM" id="MobiDB-lite"/>
    </source>
</evidence>
<evidence type="ECO:0000305" key="4"/>
<name>SIPL5_ARATH</name>
<proteinExistence type="evidence at transcript level"/>
<protein>
    <recommendedName>
        <fullName>Signal peptide peptidase-like 5</fullName>
        <shortName>AtSPPL5</shortName>
        <ecNumber>3.4.23.-</ecNumber>
    </recommendedName>
</protein>
<keyword id="KW-0025">Alternative splicing</keyword>
<keyword id="KW-0967">Endosome</keyword>
<keyword id="KW-0325">Glycoprotein</keyword>
<keyword id="KW-0378">Hydrolase</keyword>
<keyword id="KW-0472">Membrane</keyword>
<keyword id="KW-0645">Protease</keyword>
<keyword id="KW-1185">Reference proteome</keyword>
<keyword id="KW-0732">Signal</keyword>
<keyword id="KW-0812">Transmembrane</keyword>
<keyword id="KW-1133">Transmembrane helix</keyword>
<feature type="signal peptide" evidence="2">
    <location>
        <begin position="1"/>
        <end position="29"/>
    </location>
</feature>
<feature type="chain" id="PRO_0000419097" description="Signal peptide peptidase-like 5">
    <location>
        <begin position="30"/>
        <end position="536"/>
    </location>
</feature>
<feature type="topological domain" description="Lumenal" evidence="2">
    <location>
        <begin position="30"/>
        <end position="186"/>
    </location>
</feature>
<feature type="transmembrane region" description="Helical" evidence="2">
    <location>
        <begin position="187"/>
        <end position="207"/>
    </location>
</feature>
<feature type="topological domain" description="Cytoplasmic" evidence="2">
    <location>
        <begin position="208"/>
        <end position="243"/>
    </location>
</feature>
<feature type="transmembrane region" description="Helical" evidence="2">
    <location>
        <begin position="244"/>
        <end position="264"/>
    </location>
</feature>
<feature type="topological domain" description="Lumenal" evidence="2">
    <location>
        <begin position="265"/>
        <end position="273"/>
    </location>
</feature>
<feature type="transmembrane region" description="Helical" evidence="2">
    <location>
        <begin position="274"/>
        <end position="296"/>
    </location>
</feature>
<feature type="topological domain" description="Cytoplasmic" evidence="2">
    <location>
        <begin position="297"/>
        <end position="318"/>
    </location>
</feature>
<feature type="transmembrane region" description="Helical" evidence="2">
    <location>
        <begin position="319"/>
        <end position="339"/>
    </location>
</feature>
<feature type="topological domain" description="Lumenal" evidence="2">
    <location>
        <begin position="340"/>
        <end position="344"/>
    </location>
</feature>
<feature type="transmembrane region" description="Helical" evidence="2">
    <location>
        <begin position="345"/>
        <end position="365"/>
    </location>
</feature>
<feature type="topological domain" description="Cytoplasmic" evidence="2">
    <location>
        <begin position="366"/>
        <end position="374"/>
    </location>
</feature>
<feature type="transmembrane region" description="Helical" evidence="2">
    <location>
        <begin position="375"/>
        <end position="395"/>
    </location>
</feature>
<feature type="topological domain" description="Lumenal" evidence="2">
    <location>
        <begin position="396"/>
        <end position="428"/>
    </location>
</feature>
<feature type="transmembrane region" description="Helical" evidence="2">
    <location>
        <begin position="429"/>
        <end position="449"/>
    </location>
</feature>
<feature type="topological domain" description="Cytoplasmic" evidence="2">
    <location>
        <begin position="450"/>
        <end position="463"/>
    </location>
</feature>
<feature type="transmembrane region" description="Helical" evidence="2">
    <location>
        <begin position="464"/>
        <end position="484"/>
    </location>
</feature>
<feature type="topological domain" description="Lumenal" evidence="2">
    <location>
        <begin position="485"/>
        <end position="489"/>
    </location>
</feature>
<feature type="transmembrane region" description="Helical" evidence="2">
    <location>
        <begin position="490"/>
        <end position="510"/>
    </location>
</feature>
<feature type="topological domain" description="Cytoplasmic" evidence="2">
    <location>
        <begin position="511"/>
        <end position="536"/>
    </location>
</feature>
<feature type="domain" description="PA">
    <location>
        <begin position="94"/>
        <end position="170"/>
    </location>
</feature>
<feature type="region of interest" description="Disordered" evidence="3">
    <location>
        <begin position="218"/>
        <end position="238"/>
    </location>
</feature>
<feature type="short sequence motif" description="PAL">
    <location>
        <begin position="491"/>
        <end position="493"/>
    </location>
</feature>
<feature type="active site" evidence="1">
    <location>
        <position position="384"/>
    </location>
</feature>
<feature type="active site" evidence="1">
    <location>
        <position position="437"/>
    </location>
</feature>
<feature type="glycosylation site" description="N-linked (GlcNAc...) asparagine" evidence="2">
    <location>
        <position position="95"/>
    </location>
</feature>
<feature type="glycosylation site" description="N-linked (GlcNAc...) asparagine" evidence="2">
    <location>
        <position position="151"/>
    </location>
</feature>
<sequence>MSLPPFTCRLLAAAAALYLIGLLCVGADTKDVTAPKIPGCSNEFQMVKVENWVNGENGETFTAMTAQFGTMLPSDKDKAVKLPVALTTPLDSCSNLTSKLSWSIALSVRGECAFTVKAQVAQAGGAAALVLINDKEELDEMVCGEKDTSLNVSIPILMITTSSGDALKKSIMQNKKVELLLYAPKSPIVDYAVVFLWLMSVGTVFVASVWSHVTSPKKNDEQYDELSPKKSSNVDATKGGAEEETLDISAMGAVIFVISASTFLVLLFFFMSSWFILILTIFFVIGGMQGMHNINVTLITRRCSKCGQKNLKLPLLGNTSILSLVVLLFCFVVAILWFMNRKTSHAWAGQDIFGICMMINVLQVARLPNIRVATILLCCAFFYDIFWVFISPLIFKQSVMIAVARGSKDTGESIPMLLRIPRLSDPWGGYNMIGFGDILFPGLLICFIFRFDKENNKGVSNGYFPWLMFGYGLGLFLTYLGLYVMNGHGQPALLYLVPCTLGITVILGLVRKELRDLWNYGTQQPSAADVNPSPEA</sequence>
<dbReference type="EC" id="3.4.23.-"/>
<dbReference type="EMBL" id="AB330675">
    <property type="protein sequence ID" value="BAF74780.1"/>
    <property type="molecule type" value="mRNA"/>
</dbReference>
<dbReference type="EMBL" id="AC009999">
    <property type="protein sequence ID" value="AAF29388.1"/>
    <property type="molecule type" value="Genomic_DNA"/>
</dbReference>
<dbReference type="EMBL" id="CP002684">
    <property type="protein sequence ID" value="AEE27898.1"/>
    <property type="molecule type" value="Genomic_DNA"/>
</dbReference>
<dbReference type="PIR" id="H86192">
    <property type="entry name" value="H86192"/>
</dbReference>
<dbReference type="RefSeq" id="NP_172073.2">
    <molecule id="Q9MA44-1"/>
    <property type="nucleotide sequence ID" value="NM_100463.3"/>
</dbReference>
<dbReference type="SMR" id="Q9MA44"/>
<dbReference type="FunCoup" id="Q9MA44">
    <property type="interactions" value="727"/>
</dbReference>
<dbReference type="STRING" id="3702.Q9MA44"/>
<dbReference type="MEROPS" id="A22.A04"/>
<dbReference type="GlyCosmos" id="Q9MA44">
    <property type="glycosylation" value="2 sites, No reported glycans"/>
</dbReference>
<dbReference type="GlyGen" id="Q9MA44">
    <property type="glycosylation" value="2 sites"/>
</dbReference>
<dbReference type="iPTMnet" id="Q9MA44"/>
<dbReference type="PaxDb" id="3702-AT1G05820.1"/>
<dbReference type="ProteomicsDB" id="234464">
    <molecule id="Q9MA44-1"/>
</dbReference>
<dbReference type="EnsemblPlants" id="AT1G05820.1">
    <molecule id="Q9MA44-1"/>
    <property type="protein sequence ID" value="AT1G05820.1"/>
    <property type="gene ID" value="AT1G05820"/>
</dbReference>
<dbReference type="GeneID" id="837092"/>
<dbReference type="Gramene" id="AT1G05820.1">
    <molecule id="Q9MA44-1"/>
    <property type="protein sequence ID" value="AT1G05820.1"/>
    <property type="gene ID" value="AT1G05820"/>
</dbReference>
<dbReference type="KEGG" id="ath:AT1G05820"/>
<dbReference type="Araport" id="AT1G05820"/>
<dbReference type="TAIR" id="AT1G05820">
    <property type="gene designation" value="SPPL5"/>
</dbReference>
<dbReference type="eggNOG" id="KOG2442">
    <property type="taxonomic scope" value="Eukaryota"/>
</dbReference>
<dbReference type="InParanoid" id="Q9MA44"/>
<dbReference type="PhylomeDB" id="Q9MA44"/>
<dbReference type="PRO" id="PR:Q9MA44"/>
<dbReference type="Proteomes" id="UP000006548">
    <property type="component" value="Chromosome 1"/>
</dbReference>
<dbReference type="ExpressionAtlas" id="Q9MA44">
    <property type="expression patterns" value="baseline and differential"/>
</dbReference>
<dbReference type="GO" id="GO:0010008">
    <property type="term" value="C:endosome membrane"/>
    <property type="evidence" value="ECO:0007669"/>
    <property type="project" value="UniProtKB-SubCell"/>
</dbReference>
<dbReference type="GO" id="GO:0042500">
    <property type="term" value="F:aspartic endopeptidase activity, intramembrane cleaving"/>
    <property type="evidence" value="ECO:0007669"/>
    <property type="project" value="InterPro"/>
</dbReference>
<dbReference type="GO" id="GO:0006508">
    <property type="term" value="P:proteolysis"/>
    <property type="evidence" value="ECO:0007669"/>
    <property type="project" value="UniProtKB-KW"/>
</dbReference>
<dbReference type="FunFam" id="3.50.30.30:FF:000007">
    <property type="entry name" value="Signal peptide peptidase-like 3"/>
    <property type="match status" value="1"/>
</dbReference>
<dbReference type="Gene3D" id="3.50.30.30">
    <property type="match status" value="1"/>
</dbReference>
<dbReference type="InterPro" id="IPR046450">
    <property type="entry name" value="PA_dom_sf"/>
</dbReference>
<dbReference type="InterPro" id="IPR003137">
    <property type="entry name" value="PA_domain"/>
</dbReference>
<dbReference type="InterPro" id="IPR007369">
    <property type="entry name" value="Peptidase_A22B_SPP"/>
</dbReference>
<dbReference type="InterPro" id="IPR006639">
    <property type="entry name" value="Preselin/SPP"/>
</dbReference>
<dbReference type="PANTHER" id="PTHR12174">
    <property type="entry name" value="SIGNAL PEPTIDE PEPTIDASE"/>
    <property type="match status" value="1"/>
</dbReference>
<dbReference type="PANTHER" id="PTHR12174:SF100">
    <property type="entry name" value="SIGNAL PEPTIDE PEPTIDASE-LIKE 5"/>
    <property type="match status" value="1"/>
</dbReference>
<dbReference type="Pfam" id="PF02225">
    <property type="entry name" value="PA"/>
    <property type="match status" value="1"/>
</dbReference>
<dbReference type="Pfam" id="PF04258">
    <property type="entry name" value="Peptidase_A22B"/>
    <property type="match status" value="1"/>
</dbReference>
<dbReference type="SMART" id="SM00730">
    <property type="entry name" value="PSN"/>
    <property type="match status" value="1"/>
</dbReference>
<dbReference type="SUPFAM" id="SSF52025">
    <property type="entry name" value="PA domain"/>
    <property type="match status" value="1"/>
</dbReference>
<reference key="1">
    <citation type="journal article" date="2008" name="FEBS J.">
        <title>Signal peptide peptidase and its homologs in Arabidopsis thaliana - plant tissue-specific expression and distinct subcellular localization.</title>
        <authorList>
            <person name="Tamura T."/>
            <person name="Asakura T."/>
            <person name="Uemura T."/>
            <person name="Ueda T."/>
            <person name="Terauchi K."/>
            <person name="Misaka T."/>
            <person name="Abe K."/>
        </authorList>
    </citation>
    <scope>NUCLEOTIDE SEQUENCE [MRNA]</scope>
    <scope>GENE FAMILY</scope>
    <scope>NOMENCLATURE</scope>
    <source>
        <strain>cv. Columbia</strain>
        <tissue>Flower bud</tissue>
    </source>
</reference>
<reference key="2">
    <citation type="journal article" date="2000" name="Nature">
        <title>Sequence and analysis of chromosome 1 of the plant Arabidopsis thaliana.</title>
        <authorList>
            <person name="Theologis A."/>
            <person name="Ecker J.R."/>
            <person name="Palm C.J."/>
            <person name="Federspiel N.A."/>
            <person name="Kaul S."/>
            <person name="White O."/>
            <person name="Alonso J."/>
            <person name="Altafi H."/>
            <person name="Araujo R."/>
            <person name="Bowman C.L."/>
            <person name="Brooks S.Y."/>
            <person name="Buehler E."/>
            <person name="Chan A."/>
            <person name="Chao Q."/>
            <person name="Chen H."/>
            <person name="Cheuk R.F."/>
            <person name="Chin C.W."/>
            <person name="Chung M.K."/>
            <person name="Conn L."/>
            <person name="Conway A.B."/>
            <person name="Conway A.R."/>
            <person name="Creasy T.H."/>
            <person name="Dewar K."/>
            <person name="Dunn P."/>
            <person name="Etgu P."/>
            <person name="Feldblyum T.V."/>
            <person name="Feng J.-D."/>
            <person name="Fong B."/>
            <person name="Fujii C.Y."/>
            <person name="Gill J.E."/>
            <person name="Goldsmith A.D."/>
            <person name="Haas B."/>
            <person name="Hansen N.F."/>
            <person name="Hughes B."/>
            <person name="Huizar L."/>
            <person name="Hunter J.L."/>
            <person name="Jenkins J."/>
            <person name="Johnson-Hopson C."/>
            <person name="Khan S."/>
            <person name="Khaykin E."/>
            <person name="Kim C.J."/>
            <person name="Koo H.L."/>
            <person name="Kremenetskaia I."/>
            <person name="Kurtz D.B."/>
            <person name="Kwan A."/>
            <person name="Lam B."/>
            <person name="Langin-Hooper S."/>
            <person name="Lee A."/>
            <person name="Lee J.M."/>
            <person name="Lenz C.A."/>
            <person name="Li J.H."/>
            <person name="Li Y.-P."/>
            <person name="Lin X."/>
            <person name="Liu S.X."/>
            <person name="Liu Z.A."/>
            <person name="Luros J.S."/>
            <person name="Maiti R."/>
            <person name="Marziali A."/>
            <person name="Militscher J."/>
            <person name="Miranda M."/>
            <person name="Nguyen M."/>
            <person name="Nierman W.C."/>
            <person name="Osborne B.I."/>
            <person name="Pai G."/>
            <person name="Peterson J."/>
            <person name="Pham P.K."/>
            <person name="Rizzo M."/>
            <person name="Rooney T."/>
            <person name="Rowley D."/>
            <person name="Sakano H."/>
            <person name="Salzberg S.L."/>
            <person name="Schwartz J.R."/>
            <person name="Shinn P."/>
            <person name="Southwick A.M."/>
            <person name="Sun H."/>
            <person name="Tallon L.J."/>
            <person name="Tambunga G."/>
            <person name="Toriumi M.J."/>
            <person name="Town C.D."/>
            <person name="Utterback T."/>
            <person name="Van Aken S."/>
            <person name="Vaysberg M."/>
            <person name="Vysotskaia V.S."/>
            <person name="Walker M."/>
            <person name="Wu D."/>
            <person name="Yu G."/>
            <person name="Fraser C.M."/>
            <person name="Venter J.C."/>
            <person name="Davis R.W."/>
        </authorList>
    </citation>
    <scope>NUCLEOTIDE SEQUENCE [LARGE SCALE GENOMIC DNA]</scope>
    <source>
        <strain>cv. Columbia</strain>
    </source>
</reference>
<reference key="3">
    <citation type="journal article" date="2017" name="Plant J.">
        <title>Araport11: a complete reannotation of the Arabidopsis thaliana reference genome.</title>
        <authorList>
            <person name="Cheng C.Y."/>
            <person name="Krishnakumar V."/>
            <person name="Chan A.P."/>
            <person name="Thibaud-Nissen F."/>
            <person name="Schobel S."/>
            <person name="Town C.D."/>
        </authorList>
    </citation>
    <scope>GENOME REANNOTATION</scope>
    <source>
        <strain>cv. Columbia</strain>
    </source>
</reference>
<accession>Q9MA44</accession>
<comment type="function">
    <text evidence="1">Intramembrane-cleaving aspartic protease (I-CLiP) that cleaves type II membrane signal peptides in the hydrophobic plane of the membrane.</text>
</comment>
<comment type="subcellular location">
    <subcellularLocation>
        <location evidence="1">Endosome membrane</location>
        <topology evidence="1">Multi-pass membrane protein</topology>
    </subcellularLocation>
</comment>
<comment type="alternative products">
    <event type="alternative splicing"/>
    <isoform>
        <id>Q9MA44-1</id>
        <name>1</name>
        <sequence type="displayed"/>
    </isoform>
    <text>A number of isoforms are produced. According to EST sequences.</text>
</comment>
<comment type="domain">
    <text evidence="1">The PAL motif is required for normal active site conformation.</text>
</comment>
<comment type="PTM">
    <text evidence="1">Glycosylated.</text>
</comment>
<comment type="similarity">
    <text evidence="4">Belongs to the peptidase A22B family.</text>
</comment>
<organism>
    <name type="scientific">Arabidopsis thaliana</name>
    <name type="common">Mouse-ear cress</name>
    <dbReference type="NCBI Taxonomy" id="3702"/>
    <lineage>
        <taxon>Eukaryota</taxon>
        <taxon>Viridiplantae</taxon>
        <taxon>Streptophyta</taxon>
        <taxon>Embryophyta</taxon>
        <taxon>Tracheophyta</taxon>
        <taxon>Spermatophyta</taxon>
        <taxon>Magnoliopsida</taxon>
        <taxon>eudicotyledons</taxon>
        <taxon>Gunneridae</taxon>
        <taxon>Pentapetalae</taxon>
        <taxon>rosids</taxon>
        <taxon>malvids</taxon>
        <taxon>Brassicales</taxon>
        <taxon>Brassicaceae</taxon>
        <taxon>Camelineae</taxon>
        <taxon>Arabidopsis</taxon>
    </lineage>
</organism>
<gene>
    <name type="primary">SPPL5</name>
    <name type="ordered locus">At1g05820</name>
    <name type="ORF">T20M3.9</name>
</gene>